<dbReference type="EMBL" id="L26335">
    <property type="protein sequence ID" value="AAC42091.1"/>
    <property type="molecule type" value="mRNA"/>
</dbReference>
<dbReference type="PIR" id="S70006">
    <property type="entry name" value="S70006"/>
</dbReference>
<dbReference type="RefSeq" id="NP_001166361.1">
    <property type="nucleotide sequence ID" value="NM_001172890.1"/>
</dbReference>
<dbReference type="SMR" id="Q60493"/>
<dbReference type="STRING" id="10141.ENSCPOP00000032473"/>
<dbReference type="BindingDB" id="Q60493"/>
<dbReference type="ChEMBL" id="CHEMBL4105757"/>
<dbReference type="DrugCentral" id="Q60493"/>
<dbReference type="GeneID" id="100379578"/>
<dbReference type="KEGG" id="cpoc:100379578"/>
<dbReference type="CTD" id="144348"/>
<dbReference type="eggNOG" id="KOG1721">
    <property type="taxonomic scope" value="Eukaryota"/>
</dbReference>
<dbReference type="InParanoid" id="Q60493"/>
<dbReference type="OrthoDB" id="654211at2759"/>
<dbReference type="Proteomes" id="UP000005447">
    <property type="component" value="Unassembled WGS sequence"/>
</dbReference>
<dbReference type="GO" id="GO:0000785">
    <property type="term" value="C:chromatin"/>
    <property type="evidence" value="ECO:0007669"/>
    <property type="project" value="TreeGrafter"/>
</dbReference>
<dbReference type="GO" id="GO:0031519">
    <property type="term" value="C:PcG protein complex"/>
    <property type="evidence" value="ECO:0007669"/>
    <property type="project" value="TreeGrafter"/>
</dbReference>
<dbReference type="GO" id="GO:0005667">
    <property type="term" value="C:transcription regulator complex"/>
    <property type="evidence" value="ECO:0007669"/>
    <property type="project" value="TreeGrafter"/>
</dbReference>
<dbReference type="GO" id="GO:0000981">
    <property type="term" value="F:DNA-binding transcription factor activity, RNA polymerase II-specific"/>
    <property type="evidence" value="ECO:0007669"/>
    <property type="project" value="TreeGrafter"/>
</dbReference>
<dbReference type="GO" id="GO:0000978">
    <property type="term" value="F:RNA polymerase II cis-regulatory region sequence-specific DNA binding"/>
    <property type="evidence" value="ECO:0007669"/>
    <property type="project" value="TreeGrafter"/>
</dbReference>
<dbReference type="GO" id="GO:0008270">
    <property type="term" value="F:zinc ion binding"/>
    <property type="evidence" value="ECO:0007669"/>
    <property type="project" value="UniProtKB-KW"/>
</dbReference>
<dbReference type="FunFam" id="3.30.160.60:FF:000029">
    <property type="entry name" value="GLI family zinc finger 4"/>
    <property type="match status" value="3"/>
</dbReference>
<dbReference type="FunFam" id="3.30.160.60:FF:000661">
    <property type="entry name" value="paternally-expressed gene 3 protein-like"/>
    <property type="match status" value="1"/>
</dbReference>
<dbReference type="FunFam" id="3.30.160.60:FF:000016">
    <property type="entry name" value="zinc finger protein 37 homolog"/>
    <property type="match status" value="1"/>
</dbReference>
<dbReference type="FunFam" id="3.30.160.60:FF:001256">
    <property type="entry name" value="zinc finger protein 664"/>
    <property type="match status" value="1"/>
</dbReference>
<dbReference type="FunFam" id="3.30.160.60:FF:001310">
    <property type="entry name" value="zinc finger protein 664"/>
    <property type="match status" value="1"/>
</dbReference>
<dbReference type="FunFam" id="3.30.160.60:FF:001493">
    <property type="entry name" value="zinc finger protein 664"/>
    <property type="match status" value="1"/>
</dbReference>
<dbReference type="Gene3D" id="3.30.160.60">
    <property type="entry name" value="Classic Zinc Finger"/>
    <property type="match status" value="9"/>
</dbReference>
<dbReference type="InterPro" id="IPR036236">
    <property type="entry name" value="Znf_C2H2_sf"/>
</dbReference>
<dbReference type="InterPro" id="IPR013087">
    <property type="entry name" value="Znf_C2H2_type"/>
</dbReference>
<dbReference type="PANTHER" id="PTHR14003">
    <property type="entry name" value="TRANSCRIPTIONAL REPRESSOR PROTEIN YY"/>
    <property type="match status" value="1"/>
</dbReference>
<dbReference type="PANTHER" id="PTHR14003:SF23">
    <property type="entry name" value="ZINC FINGER PROTEIN 143"/>
    <property type="match status" value="1"/>
</dbReference>
<dbReference type="Pfam" id="PF00096">
    <property type="entry name" value="zf-C2H2"/>
    <property type="match status" value="8"/>
</dbReference>
<dbReference type="SMART" id="SM00355">
    <property type="entry name" value="ZnF_C2H2"/>
    <property type="match status" value="9"/>
</dbReference>
<dbReference type="SUPFAM" id="SSF57667">
    <property type="entry name" value="beta-beta-alpha zinc fingers"/>
    <property type="match status" value="5"/>
</dbReference>
<dbReference type="PROSITE" id="PS00028">
    <property type="entry name" value="ZINC_FINGER_C2H2_1"/>
    <property type="match status" value="9"/>
</dbReference>
<dbReference type="PROSITE" id="PS50157">
    <property type="entry name" value="ZINC_FINGER_C2H2_2"/>
    <property type="match status" value="9"/>
</dbReference>
<gene>
    <name type="primary">ZNF664</name>
    <name type="synonym">ZFOC1</name>
</gene>
<feature type="chain" id="PRO_0000296272" description="Zinc finger protein 664">
    <location>
        <begin position="1"/>
        <end position="261"/>
    </location>
</feature>
<feature type="zinc finger region" description="C2H2-type 1" evidence="2">
    <location>
        <begin position="3"/>
        <end position="25"/>
    </location>
</feature>
<feature type="zinc finger region" description="C2H2-type 2" evidence="2">
    <location>
        <begin position="31"/>
        <end position="53"/>
    </location>
</feature>
<feature type="zinc finger region" description="C2H2-type 3" evidence="2">
    <location>
        <begin position="59"/>
        <end position="81"/>
    </location>
</feature>
<feature type="zinc finger region" description="C2H2-type 4" evidence="2">
    <location>
        <begin position="87"/>
        <end position="109"/>
    </location>
</feature>
<feature type="zinc finger region" description="C2H2-type 5" evidence="2">
    <location>
        <begin position="115"/>
        <end position="137"/>
    </location>
</feature>
<feature type="zinc finger region" description="C2H2-type 6" evidence="2">
    <location>
        <begin position="143"/>
        <end position="165"/>
    </location>
</feature>
<feature type="zinc finger region" description="C2H2-type 7" evidence="2">
    <location>
        <begin position="171"/>
        <end position="193"/>
    </location>
</feature>
<feature type="zinc finger region" description="C2H2-type 8" evidence="2">
    <location>
        <begin position="199"/>
        <end position="221"/>
    </location>
</feature>
<feature type="zinc finger region" description="C2H2-type 9" evidence="2">
    <location>
        <begin position="227"/>
        <end position="249"/>
    </location>
</feature>
<feature type="cross-link" description="Glycyl lysine isopeptide (Lys-Gly) (interchain with G-Cter in SUMO2)" evidence="1">
    <location>
        <position position="257"/>
    </location>
</feature>
<organism>
    <name type="scientific">Cavia porcellus</name>
    <name type="common">Guinea pig</name>
    <dbReference type="NCBI Taxonomy" id="10141"/>
    <lineage>
        <taxon>Eukaryota</taxon>
        <taxon>Metazoa</taxon>
        <taxon>Chordata</taxon>
        <taxon>Craniata</taxon>
        <taxon>Vertebrata</taxon>
        <taxon>Euteleostomi</taxon>
        <taxon>Mammalia</taxon>
        <taxon>Eutheria</taxon>
        <taxon>Euarchontoglires</taxon>
        <taxon>Glires</taxon>
        <taxon>Rodentia</taxon>
        <taxon>Hystricomorpha</taxon>
        <taxon>Caviidae</taxon>
        <taxon>Cavia</taxon>
    </lineage>
</organism>
<reference key="1">
    <citation type="journal article" date="1996" name="Biochim. Biophys. Acta">
        <title>A novel zinc finger gene preferentially expressed in the retina and the organ of Corti localizes to human chromosome 12q24.3.</title>
        <authorList>
            <person name="Rivolta M.N."/>
            <person name="Negrini C."/>
            <person name="Wilcox E.R."/>
        </authorList>
    </citation>
    <scope>NUCLEOTIDE SEQUENCE [MRNA]</scope>
    <scope>TISSUE SPECIFICITY</scope>
    <source>
        <strain>NIH 2</strain>
        <tissue>Organ of Corti</tissue>
    </source>
</reference>
<proteinExistence type="evidence at transcript level"/>
<evidence type="ECO:0000250" key="1">
    <source>
        <dbReference type="UniProtKB" id="Q8N3J9"/>
    </source>
</evidence>
<evidence type="ECO:0000255" key="2">
    <source>
        <dbReference type="PROSITE-ProRule" id="PRU00042"/>
    </source>
</evidence>
<evidence type="ECO:0000269" key="3">
    <source>
    </source>
</evidence>
<evidence type="ECO:0000305" key="4"/>
<accession>Q60493</accession>
<comment type="function">
    <text>May be involved in transcriptional regulation.</text>
</comment>
<comment type="subcellular location">
    <subcellularLocation>
        <location evidence="4">Nucleus</location>
    </subcellularLocation>
</comment>
<comment type="tissue specificity">
    <text evidence="3">Expressed in the organ of Corti, stria vascularis, auditory nerve and retina. Lower levels in the tongue, cerebellum, small intestine and kidney.</text>
</comment>
<comment type="similarity">
    <text evidence="4">Belongs to the krueppel C2H2-type zinc-finger protein family.</text>
</comment>
<keyword id="KW-0238">DNA-binding</keyword>
<keyword id="KW-1017">Isopeptide bond</keyword>
<keyword id="KW-0479">Metal-binding</keyword>
<keyword id="KW-0539">Nucleus</keyword>
<keyword id="KW-1185">Reference proteome</keyword>
<keyword id="KW-0677">Repeat</keyword>
<keyword id="KW-0804">Transcription</keyword>
<keyword id="KW-0805">Transcription regulation</keyword>
<keyword id="KW-0832">Ubl conjugation</keyword>
<keyword id="KW-0862">Zinc</keyword>
<keyword id="KW-0863">Zinc-finger</keyword>
<name>ZN664_CAVPO</name>
<sequence length="261" mass="30280">MIYKCPMCREFFSERADLFMHQKVHTAEKPHKCDKCDKGFFHISELHIHWRDHTGEKVYKCDDCGKDFSTTTKLNRHKKIHTVEKPYKCYECGKAFNWSPHLQIHMRVHTGEKPYVCSECGRGFSNSSNLCMHQRVHTGEKPFKCEECGKAFRHTSSLCMHQRVHTGEKPYKCYECGKAFSQSSSLCIHQRVHTGEKPYRCCGCGKAFSQSSSLCIHQRVHTGEKPFKCDECGKAFSQSTSLCIHQRVHTKERNHLKISVI</sequence>
<protein>
    <recommendedName>
        <fullName>Zinc finger protein 664</fullName>
    </recommendedName>
    <alternativeName>
        <fullName>Zinc finger protein from organ of Corti</fullName>
    </alternativeName>
</protein>